<evidence type="ECO:0000255" key="1">
    <source>
        <dbReference type="HAMAP-Rule" id="MF_00444"/>
    </source>
</evidence>
<accession>Q1JDA9</accession>
<reference key="1">
    <citation type="journal article" date="2006" name="Proc. Natl. Acad. Sci. U.S.A.">
        <title>Molecular genetic anatomy of inter- and intraserotype variation in the human bacterial pathogen group A Streptococcus.</title>
        <authorList>
            <person name="Beres S.B."/>
            <person name="Richter E.W."/>
            <person name="Nagiec M.J."/>
            <person name="Sumby P."/>
            <person name="Porcella S.F."/>
            <person name="DeLeo F.R."/>
            <person name="Musser J.M."/>
        </authorList>
    </citation>
    <scope>NUCLEOTIDE SEQUENCE [LARGE SCALE GENOMIC DNA]</scope>
    <source>
        <strain>MGAS2096</strain>
    </source>
</reference>
<organism>
    <name type="scientific">Streptococcus pyogenes serotype M12 (strain MGAS2096)</name>
    <dbReference type="NCBI Taxonomy" id="370553"/>
    <lineage>
        <taxon>Bacteria</taxon>
        <taxon>Bacillati</taxon>
        <taxon>Bacillota</taxon>
        <taxon>Bacilli</taxon>
        <taxon>Lactobacillales</taxon>
        <taxon>Streptococcaceae</taxon>
        <taxon>Streptococcus</taxon>
    </lineage>
</organism>
<feature type="chain" id="PRO_0000252852" description="ATP-dependent Clp protease proteolytic subunit">
    <location>
        <begin position="1"/>
        <end position="196"/>
    </location>
</feature>
<feature type="active site" description="Nucleophile" evidence="1">
    <location>
        <position position="96"/>
    </location>
</feature>
<feature type="active site" evidence="1">
    <location>
        <position position="121"/>
    </location>
</feature>
<proteinExistence type="inferred from homology"/>
<keyword id="KW-0963">Cytoplasm</keyword>
<keyword id="KW-0378">Hydrolase</keyword>
<keyword id="KW-0645">Protease</keyword>
<keyword id="KW-0720">Serine protease</keyword>
<comment type="function">
    <text evidence="1">Cleaves peptides in various proteins in a process that requires ATP hydrolysis. Has a chymotrypsin-like activity. Plays a major role in the degradation of misfolded proteins.</text>
</comment>
<comment type="catalytic activity">
    <reaction evidence="1">
        <text>Hydrolysis of proteins to small peptides in the presence of ATP and magnesium. alpha-casein is the usual test substrate. In the absence of ATP, only oligopeptides shorter than five residues are hydrolyzed (such as succinyl-Leu-Tyr-|-NHMec, and Leu-Tyr-Leu-|-Tyr-Trp, in which cleavage of the -Tyr-|-Leu- and -Tyr-|-Trp bonds also occurs).</text>
        <dbReference type="EC" id="3.4.21.92"/>
    </reaction>
</comment>
<comment type="subunit">
    <text evidence="1">Fourteen ClpP subunits assemble into 2 heptameric rings which stack back to back to give a disk-like structure with a central cavity, resembling the structure of eukaryotic proteasomes.</text>
</comment>
<comment type="subcellular location">
    <subcellularLocation>
        <location evidence="1">Cytoplasm</location>
    </subcellularLocation>
</comment>
<comment type="similarity">
    <text evidence="1">Belongs to the peptidase S14 family.</text>
</comment>
<gene>
    <name evidence="1" type="primary">clpP</name>
    <name type="ordered locus">MGAS2096_Spy0347</name>
</gene>
<name>CLPP_STRPB</name>
<dbReference type="EC" id="3.4.21.92" evidence="1"/>
<dbReference type="EMBL" id="CP000261">
    <property type="protein sequence ID" value="ABF35399.1"/>
    <property type="molecule type" value="Genomic_DNA"/>
</dbReference>
<dbReference type="SMR" id="Q1JDA9"/>
<dbReference type="MEROPS" id="S14.001"/>
<dbReference type="KEGG" id="spj:MGAS2096_Spy0347"/>
<dbReference type="HOGENOM" id="CLU_058707_3_2_9"/>
<dbReference type="GO" id="GO:0005737">
    <property type="term" value="C:cytoplasm"/>
    <property type="evidence" value="ECO:0007669"/>
    <property type="project" value="UniProtKB-SubCell"/>
</dbReference>
<dbReference type="GO" id="GO:0009368">
    <property type="term" value="C:endopeptidase Clp complex"/>
    <property type="evidence" value="ECO:0007669"/>
    <property type="project" value="TreeGrafter"/>
</dbReference>
<dbReference type="GO" id="GO:0004176">
    <property type="term" value="F:ATP-dependent peptidase activity"/>
    <property type="evidence" value="ECO:0007669"/>
    <property type="project" value="InterPro"/>
</dbReference>
<dbReference type="GO" id="GO:0051117">
    <property type="term" value="F:ATPase binding"/>
    <property type="evidence" value="ECO:0007669"/>
    <property type="project" value="TreeGrafter"/>
</dbReference>
<dbReference type="GO" id="GO:0004252">
    <property type="term" value="F:serine-type endopeptidase activity"/>
    <property type="evidence" value="ECO:0007669"/>
    <property type="project" value="UniProtKB-UniRule"/>
</dbReference>
<dbReference type="GO" id="GO:0006515">
    <property type="term" value="P:protein quality control for misfolded or incompletely synthesized proteins"/>
    <property type="evidence" value="ECO:0007669"/>
    <property type="project" value="TreeGrafter"/>
</dbReference>
<dbReference type="CDD" id="cd07017">
    <property type="entry name" value="S14_ClpP_2"/>
    <property type="match status" value="1"/>
</dbReference>
<dbReference type="FunFam" id="3.90.226.10:FF:000014">
    <property type="entry name" value="ATP-dependent Clp protease proteolytic subunit"/>
    <property type="match status" value="1"/>
</dbReference>
<dbReference type="Gene3D" id="3.90.226.10">
    <property type="entry name" value="2-enoyl-CoA Hydratase, Chain A, domain 1"/>
    <property type="match status" value="1"/>
</dbReference>
<dbReference type="HAMAP" id="MF_00444">
    <property type="entry name" value="ClpP"/>
    <property type="match status" value="1"/>
</dbReference>
<dbReference type="InterPro" id="IPR001907">
    <property type="entry name" value="ClpP"/>
</dbReference>
<dbReference type="InterPro" id="IPR029045">
    <property type="entry name" value="ClpP/crotonase-like_dom_sf"/>
</dbReference>
<dbReference type="InterPro" id="IPR023562">
    <property type="entry name" value="ClpP/TepA"/>
</dbReference>
<dbReference type="InterPro" id="IPR033135">
    <property type="entry name" value="ClpP_His_AS"/>
</dbReference>
<dbReference type="InterPro" id="IPR018215">
    <property type="entry name" value="ClpP_Ser_AS"/>
</dbReference>
<dbReference type="NCBIfam" id="NF001368">
    <property type="entry name" value="PRK00277.1"/>
    <property type="match status" value="1"/>
</dbReference>
<dbReference type="NCBIfam" id="NF009205">
    <property type="entry name" value="PRK12553.1"/>
    <property type="match status" value="1"/>
</dbReference>
<dbReference type="PANTHER" id="PTHR10381">
    <property type="entry name" value="ATP-DEPENDENT CLP PROTEASE PROTEOLYTIC SUBUNIT"/>
    <property type="match status" value="1"/>
</dbReference>
<dbReference type="PANTHER" id="PTHR10381:SF70">
    <property type="entry name" value="ATP-DEPENDENT CLP PROTEASE PROTEOLYTIC SUBUNIT"/>
    <property type="match status" value="1"/>
</dbReference>
<dbReference type="Pfam" id="PF00574">
    <property type="entry name" value="CLP_protease"/>
    <property type="match status" value="1"/>
</dbReference>
<dbReference type="PRINTS" id="PR00127">
    <property type="entry name" value="CLPPROTEASEP"/>
</dbReference>
<dbReference type="SUPFAM" id="SSF52096">
    <property type="entry name" value="ClpP/crotonase"/>
    <property type="match status" value="1"/>
</dbReference>
<dbReference type="PROSITE" id="PS00382">
    <property type="entry name" value="CLP_PROTEASE_HIS"/>
    <property type="match status" value="1"/>
</dbReference>
<dbReference type="PROSITE" id="PS00381">
    <property type="entry name" value="CLP_PROTEASE_SER"/>
    <property type="match status" value="1"/>
</dbReference>
<sequence>MIPVVIEQTSRGERSYDIYSRLLKDRIIMLTGPVEDNMANSVIAQLLFLDAQDNTKDIYLYVNTPGGSVSAGLAIVDTMNFIKADVQTIVMGMAASMGTVIASSGTKGKRFMLPNAEYMIHQPMGGTGGGTQQTDMAIAAEHLLKTRHRLEKILAQNAGKTIKQIHKDAERDYWMSAEETLAYGFIDEIMENNELK</sequence>
<protein>
    <recommendedName>
        <fullName evidence="1">ATP-dependent Clp protease proteolytic subunit</fullName>
        <ecNumber evidence="1">3.4.21.92</ecNumber>
    </recommendedName>
    <alternativeName>
        <fullName evidence="1">Endopeptidase Clp</fullName>
    </alternativeName>
</protein>